<name>RECA_LACHE</name>
<protein>
    <recommendedName>
        <fullName>Protein RecA</fullName>
    </recommendedName>
    <alternativeName>
        <fullName>Recombinase A</fullName>
    </alternativeName>
</protein>
<proteinExistence type="inferred from homology"/>
<dbReference type="EMBL" id="M94059">
    <property type="protein sequence ID" value="AAA25242.1"/>
    <property type="molecule type" value="Genomic_DNA"/>
</dbReference>
<dbReference type="PIR" id="C42721">
    <property type="entry name" value="C42721"/>
</dbReference>
<dbReference type="SMR" id="Q02348"/>
<dbReference type="eggNOG" id="COG0468">
    <property type="taxonomic scope" value="Bacteria"/>
</dbReference>
<dbReference type="GO" id="GO:0005829">
    <property type="term" value="C:cytosol"/>
    <property type="evidence" value="ECO:0007669"/>
    <property type="project" value="TreeGrafter"/>
</dbReference>
<dbReference type="GO" id="GO:0005524">
    <property type="term" value="F:ATP binding"/>
    <property type="evidence" value="ECO:0007669"/>
    <property type="project" value="UniProtKB-KW"/>
</dbReference>
<dbReference type="GO" id="GO:0140664">
    <property type="term" value="F:ATP-dependent DNA damage sensor activity"/>
    <property type="evidence" value="ECO:0007669"/>
    <property type="project" value="InterPro"/>
</dbReference>
<dbReference type="GO" id="GO:0003697">
    <property type="term" value="F:single-stranded DNA binding"/>
    <property type="evidence" value="ECO:0007669"/>
    <property type="project" value="InterPro"/>
</dbReference>
<dbReference type="GO" id="GO:0006310">
    <property type="term" value="P:DNA recombination"/>
    <property type="evidence" value="ECO:0007669"/>
    <property type="project" value="UniProtKB-KW"/>
</dbReference>
<dbReference type="GO" id="GO:0006281">
    <property type="term" value="P:DNA repair"/>
    <property type="evidence" value="ECO:0007669"/>
    <property type="project" value="UniProtKB-KW"/>
</dbReference>
<dbReference type="GO" id="GO:0009432">
    <property type="term" value="P:SOS response"/>
    <property type="evidence" value="ECO:0007669"/>
    <property type="project" value="UniProtKB-KW"/>
</dbReference>
<dbReference type="Gene3D" id="3.40.50.300">
    <property type="entry name" value="P-loop containing nucleotide triphosphate hydrolases"/>
    <property type="match status" value="1"/>
</dbReference>
<dbReference type="InterPro" id="IPR013765">
    <property type="entry name" value="DNA_recomb/repair_RecA"/>
</dbReference>
<dbReference type="InterPro" id="IPR027417">
    <property type="entry name" value="P-loop_NTPase"/>
</dbReference>
<dbReference type="InterPro" id="IPR049428">
    <property type="entry name" value="RecA-like_N"/>
</dbReference>
<dbReference type="InterPro" id="IPR020588">
    <property type="entry name" value="RecA_ATP-bd"/>
</dbReference>
<dbReference type="PANTHER" id="PTHR45900:SF1">
    <property type="entry name" value="MITOCHONDRIAL DNA REPAIR PROTEIN RECA HOMOLOG-RELATED"/>
    <property type="match status" value="1"/>
</dbReference>
<dbReference type="PANTHER" id="PTHR45900">
    <property type="entry name" value="RECA"/>
    <property type="match status" value="1"/>
</dbReference>
<dbReference type="Pfam" id="PF00154">
    <property type="entry name" value="RecA"/>
    <property type="match status" value="1"/>
</dbReference>
<dbReference type="PRINTS" id="PR00142">
    <property type="entry name" value="RECA"/>
</dbReference>
<dbReference type="SUPFAM" id="SSF52540">
    <property type="entry name" value="P-loop containing nucleoside triphosphate hydrolases"/>
    <property type="match status" value="1"/>
</dbReference>
<dbReference type="PROSITE" id="PS50162">
    <property type="entry name" value="RECA_2"/>
    <property type="match status" value="1"/>
</dbReference>
<comment type="function">
    <text evidence="1">Can catalyze the hydrolysis of ATP in the presence of single-stranded DNA, the ATP-dependent uptake of single-stranded DNA by duplex DNA, and the ATP-dependent hybridization of homologous single-stranded DNAs. It interacts with LexA causing its activation and leading to its autocatalytic cleavage (By similarity).</text>
</comment>
<comment type="subcellular location">
    <subcellularLocation>
        <location evidence="1">Cytoplasm</location>
    </subcellularLocation>
</comment>
<comment type="similarity">
    <text evidence="2">Belongs to the RecA family.</text>
</comment>
<evidence type="ECO:0000250" key="1"/>
<evidence type="ECO:0000305" key="2"/>
<feature type="chain" id="PRO_0000122731" description="Protein RecA">
    <location>
        <begin position="1" status="less than"/>
        <end position="104" status="greater than"/>
    </location>
</feature>
<feature type="non-terminal residue">
    <location>
        <position position="1"/>
    </location>
</feature>
<feature type="non-terminal residue">
    <location>
        <position position="104"/>
    </location>
</feature>
<organism>
    <name type="scientific">Lactobacillus helveticus</name>
    <name type="common">Lactobacillus suntoryeus</name>
    <dbReference type="NCBI Taxonomy" id="1587"/>
    <lineage>
        <taxon>Bacteria</taxon>
        <taxon>Bacillati</taxon>
        <taxon>Bacillota</taxon>
        <taxon>Bacilli</taxon>
        <taxon>Lactobacillales</taxon>
        <taxon>Lactobacillaceae</taxon>
        <taxon>Lactobacillus</taxon>
    </lineage>
</organism>
<keyword id="KW-0067">ATP-binding</keyword>
<keyword id="KW-0963">Cytoplasm</keyword>
<keyword id="KW-0227">DNA damage</keyword>
<keyword id="KW-0233">DNA recombination</keyword>
<keyword id="KW-0234">DNA repair</keyword>
<keyword id="KW-0238">DNA-binding</keyword>
<keyword id="KW-0547">Nucleotide-binding</keyword>
<keyword id="KW-0742">SOS response</keyword>
<gene>
    <name type="primary">recA</name>
</gene>
<accession>Q02348</accession>
<reference key="1">
    <citation type="journal article" date="1992" name="J. Bacteriol.">
        <title>A general method for cloning recA genes of Gram-positive bacteria by polymerase chain reaction.</title>
        <authorList>
            <person name="Duwat P."/>
            <person name="Ehrlich S.D."/>
            <person name="Gruss A."/>
        </authorList>
    </citation>
    <scope>NUCLEOTIDE SEQUENCE [GENOMIC DNA]</scope>
    <source>
        <strain>IL1235</strain>
    </source>
</reference>
<sequence>AYAEALGVDIDSLILSQPNTGEEGLQIADTLISSGAIDIVVVDSVAALVPRAEIEGEMGDAHVGLQARLMSQALRKLSGTISKTKTIAIFINQIREKVGIMFGN</sequence>